<reference key="1">
    <citation type="journal article" date="2002" name="J. Mol. Biol.">
        <title>Bacteriophage Mu genome sequence: analysis and comparison with Mu-like prophages in Haemophilus, Neisseria and Deinococcus.</title>
        <authorList>
            <person name="Morgan G.J."/>
            <person name="Hatfull G.F."/>
            <person name="Casjens S."/>
            <person name="Hendrix R.W."/>
        </authorList>
    </citation>
    <scope>NUCLEOTIDE SEQUENCE [LARGE SCALE GENOMIC DNA]</scope>
</reference>
<reference key="2">
    <citation type="journal article" date="2022" name="MBio">
        <title>Endolysin Regulation in Phage Mu Lysis.</title>
        <authorList>
            <person name="Chamblee J.S."/>
            <person name="Ramsey J."/>
            <person name="Chen Y."/>
            <person name="Maddox L.T."/>
            <person name="Ross C."/>
            <person name="To K.H."/>
            <person name="Cahill J.L."/>
            <person name="Young R."/>
        </authorList>
    </citation>
    <scope>FUNCTION</scope>
    <scope>IDENTIFICATION</scope>
    <scope>SUBUNIT</scope>
</reference>
<dbReference type="EMBL" id="AF083977">
    <property type="status" value="NOT_ANNOTATED_CDS"/>
    <property type="molecule type" value="Genomic_DNA"/>
</dbReference>
<dbReference type="Proteomes" id="UP000002611">
    <property type="component" value="Genome"/>
</dbReference>
<dbReference type="GO" id="GO:0020002">
    <property type="term" value="C:host cell plasma membrane"/>
    <property type="evidence" value="ECO:0007669"/>
    <property type="project" value="UniProtKB-SubCell"/>
</dbReference>
<dbReference type="GO" id="GO:0016020">
    <property type="term" value="C:membrane"/>
    <property type="evidence" value="ECO:0007669"/>
    <property type="project" value="UniProtKB-KW"/>
</dbReference>
<dbReference type="GO" id="GO:0044659">
    <property type="term" value="P:viral release from host cell by cytolysis"/>
    <property type="evidence" value="ECO:0000314"/>
    <property type="project" value="UniProtKB"/>
</dbReference>
<dbReference type="Pfam" id="PF23793">
    <property type="entry name" value="LysC"/>
    <property type="match status" value="1"/>
</dbReference>
<sequence>MMQKKKLQPPLLVTIAALVLCLPLLLTGCGNSKNAPVPSVVILPEIDTELTEATPVPPMPQPLTWGASLLWNADLLMALGQCNRDKASVREQEIRRKEIYERRPEPGGGAAAR</sequence>
<evidence type="ECO:0000250" key="1">
    <source>
        <dbReference type="UniProtKB" id="Q9XJJ7"/>
    </source>
</evidence>
<evidence type="ECO:0000255" key="2"/>
<evidence type="ECO:0000256" key="3">
    <source>
        <dbReference type="SAM" id="MobiDB-lite"/>
    </source>
</evidence>
<evidence type="ECO:0000269" key="4">
    <source>
    </source>
</evidence>
<evidence type="ECO:0000305" key="5"/>
<evidence type="ECO:0000305" key="6">
    <source>
    </source>
</evidence>
<keyword id="KW-0204">Cytolysis</keyword>
<keyword id="KW-0578">Host cell lysis by virus</keyword>
<keyword id="KW-1033">Host cell outer membrane</keyword>
<keyword id="KW-1043">Host membrane</keyword>
<keyword id="KW-0449">Lipoprotein</keyword>
<keyword id="KW-0472">Membrane</keyword>
<keyword id="KW-0564">Palmitate</keyword>
<keyword id="KW-1185">Reference proteome</keyword>
<keyword id="KW-0732">Signal</keyword>
<keyword id="KW-1188">Viral release from host cell</keyword>
<organismHost>
    <name type="scientific">Enterobacteriaceae</name>
    <dbReference type="NCBI Taxonomy" id="543"/>
</organismHost>
<feature type="signal peptide" evidence="2">
    <location>
        <begin position="1"/>
        <end position="28"/>
    </location>
</feature>
<feature type="chain" id="PRO_0000456814" description="Spanin, outer lipoprotein subunit">
    <location>
        <begin position="29"/>
        <end position="113"/>
    </location>
</feature>
<feature type="region of interest" description="Disordered" evidence="3">
    <location>
        <begin position="91"/>
        <end position="113"/>
    </location>
</feature>
<feature type="compositionally biased region" description="Basic and acidic residues" evidence="3">
    <location>
        <begin position="91"/>
        <end position="105"/>
    </location>
</feature>
<feature type="lipid moiety-binding region" description="N-palmitoyl cysteine; by host" evidence="1">
    <location>
        <position position="29"/>
    </location>
</feature>
<feature type="lipid moiety-binding region" description="S-diacylglycerol cysteine; by host" evidence="1">
    <location>
        <position position="29"/>
    </location>
</feature>
<protein>
    <recommendedName>
        <fullName>Spanin, outer lipoprotein subunit</fullName>
        <shortName>o-spanin</shortName>
    </recommendedName>
    <alternativeName>
        <fullName>gene product 23.1</fullName>
        <shortName>gp23.1</shortName>
    </alternativeName>
</protein>
<accession>P0DTL7</accession>
<gene>
    <name type="ordered locus">Mup23.1</name>
</gene>
<name>SPAN2_BPMU</name>
<organism>
    <name type="scientific">Escherichia phage Mu</name>
    <name type="common">Bacteriophage Mu</name>
    <dbReference type="NCBI Taxonomy" id="2681603"/>
    <lineage>
        <taxon>Viruses</taxon>
        <taxon>Duplodnaviria</taxon>
        <taxon>Heunggongvirae</taxon>
        <taxon>Uroviricota</taxon>
        <taxon>Caudoviricetes</taxon>
        <taxon>Muvirus</taxon>
        <taxon>Muvirus mu</taxon>
    </lineage>
</organism>
<proteinExistence type="evidence at protein level"/>
<comment type="function">
    <text evidence="4">Component of the spanin complex that disrupts the host outer membrane and participates in cell lysis during virus exit. The spanin complex conducts the final step in host lysis by disrupting the outer membrane after holin and endolysin action have permeabilized the inner membrane and degraded the host peptidoglycans. Host outer membrane disruption is possibly due to local fusion between the inner and outer membrane performed by the spanin complex.</text>
</comment>
<comment type="subunit">
    <text evidence="6">Interacts with the spanin inner membrane subunit. Part of the spanin complex which spans the entire periplasmic space. The spanin complex is composed of spanin inner membrane subunit and spanin outer membrane subunit.</text>
</comment>
<comment type="subcellular location">
    <subcellularLocation>
        <location evidence="5">Host cell outer membrane</location>
        <topology evidence="5">Lipid-anchor</topology>
        <orientation evidence="5">Periplasmic side</orientation>
    </subcellularLocation>
</comment>